<sequence length="149" mass="16470">MADNARAARMAKRIQTIVASAIERDIKDRRLEFVTITDVTMTGDLHDAKVFYTVRGASIEEEPDLEAAAEALHRARGQLRKIVGQQLGVRFTPTLTYSIDTVPEASAHMEALLDRARKRDEELAKLREGAAPAGDADPYKTSSKSESEE</sequence>
<keyword id="KW-0963">Cytoplasm</keyword>
<keyword id="KW-1185">Reference proteome</keyword>
<keyword id="KW-0690">Ribosome biogenesis</keyword>
<evidence type="ECO:0000255" key="1">
    <source>
        <dbReference type="HAMAP-Rule" id="MF_00003"/>
    </source>
</evidence>
<evidence type="ECO:0000256" key="2">
    <source>
        <dbReference type="SAM" id="MobiDB-lite"/>
    </source>
</evidence>
<name>RBFA_CORGL</name>
<protein>
    <recommendedName>
        <fullName evidence="1">Ribosome-binding factor A</fullName>
    </recommendedName>
</protein>
<accession>Q8NP41</accession>
<organism>
    <name type="scientific">Corynebacterium glutamicum (strain ATCC 13032 / DSM 20300 / JCM 1318 / BCRC 11384 / CCUG 27702 / LMG 3730 / NBRC 12168 / NCIMB 10025 / NRRL B-2784 / 534)</name>
    <dbReference type="NCBI Taxonomy" id="196627"/>
    <lineage>
        <taxon>Bacteria</taxon>
        <taxon>Bacillati</taxon>
        <taxon>Actinomycetota</taxon>
        <taxon>Actinomycetes</taxon>
        <taxon>Mycobacteriales</taxon>
        <taxon>Corynebacteriaceae</taxon>
        <taxon>Corynebacterium</taxon>
    </lineage>
</organism>
<proteinExistence type="inferred from homology"/>
<comment type="function">
    <text evidence="1">One of several proteins that assist in the late maturation steps of the functional core of the 30S ribosomal subunit. Associates with free 30S ribosomal subunits (but not with 30S subunits that are part of 70S ribosomes or polysomes). Required for efficient processing of 16S rRNA. May interact with the 5'-terminal helix region of 16S rRNA.</text>
</comment>
<comment type="subunit">
    <text evidence="1">Monomer. Binds 30S ribosomal subunits, but not 50S ribosomal subunits or 70S ribosomes.</text>
</comment>
<comment type="subcellular location">
    <subcellularLocation>
        <location evidence="1">Cytoplasm</location>
    </subcellularLocation>
</comment>
<comment type="similarity">
    <text evidence="1">Belongs to the RbfA family.</text>
</comment>
<dbReference type="EMBL" id="BA000036">
    <property type="protein sequence ID" value="BAB99377.1"/>
    <property type="molecule type" value="Genomic_DNA"/>
</dbReference>
<dbReference type="EMBL" id="BX927153">
    <property type="protein sequence ID" value="CAF20325.1"/>
    <property type="molecule type" value="Genomic_DNA"/>
</dbReference>
<dbReference type="RefSeq" id="NP_601190.1">
    <property type="nucleotide sequence ID" value="NC_003450.3"/>
</dbReference>
<dbReference type="RefSeq" id="WP_003861694.1">
    <property type="nucleotide sequence ID" value="NC_006958.1"/>
</dbReference>
<dbReference type="SMR" id="Q8NP41"/>
<dbReference type="STRING" id="196627.cg2175"/>
<dbReference type="GeneID" id="1019941"/>
<dbReference type="KEGG" id="cgb:cg2175"/>
<dbReference type="KEGG" id="cgl:Cgl1984"/>
<dbReference type="PATRIC" id="fig|196627.13.peg.1923"/>
<dbReference type="eggNOG" id="COG0858">
    <property type="taxonomic scope" value="Bacteria"/>
</dbReference>
<dbReference type="HOGENOM" id="CLU_089475_0_0_11"/>
<dbReference type="OrthoDB" id="307788at2"/>
<dbReference type="BioCyc" id="CORYNE:G18NG-11576-MONOMER"/>
<dbReference type="Proteomes" id="UP000000582">
    <property type="component" value="Chromosome"/>
</dbReference>
<dbReference type="Proteomes" id="UP000001009">
    <property type="component" value="Chromosome"/>
</dbReference>
<dbReference type="GO" id="GO:0005829">
    <property type="term" value="C:cytosol"/>
    <property type="evidence" value="ECO:0007669"/>
    <property type="project" value="TreeGrafter"/>
</dbReference>
<dbReference type="GO" id="GO:0043024">
    <property type="term" value="F:ribosomal small subunit binding"/>
    <property type="evidence" value="ECO:0007669"/>
    <property type="project" value="TreeGrafter"/>
</dbReference>
<dbReference type="GO" id="GO:0030490">
    <property type="term" value="P:maturation of SSU-rRNA"/>
    <property type="evidence" value="ECO:0007669"/>
    <property type="project" value="UniProtKB-UniRule"/>
</dbReference>
<dbReference type="Gene3D" id="3.30.300.20">
    <property type="match status" value="1"/>
</dbReference>
<dbReference type="HAMAP" id="MF_00003">
    <property type="entry name" value="RbfA"/>
    <property type="match status" value="1"/>
</dbReference>
<dbReference type="InterPro" id="IPR015946">
    <property type="entry name" value="KH_dom-like_a/b"/>
</dbReference>
<dbReference type="InterPro" id="IPR000238">
    <property type="entry name" value="RbfA"/>
</dbReference>
<dbReference type="InterPro" id="IPR023799">
    <property type="entry name" value="RbfA_dom_sf"/>
</dbReference>
<dbReference type="InterPro" id="IPR020053">
    <property type="entry name" value="Ribosome-bd_factorA_CS"/>
</dbReference>
<dbReference type="NCBIfam" id="TIGR00082">
    <property type="entry name" value="rbfA"/>
    <property type="match status" value="1"/>
</dbReference>
<dbReference type="PANTHER" id="PTHR33515">
    <property type="entry name" value="RIBOSOME-BINDING FACTOR A, CHLOROPLASTIC-RELATED"/>
    <property type="match status" value="1"/>
</dbReference>
<dbReference type="PANTHER" id="PTHR33515:SF1">
    <property type="entry name" value="RIBOSOME-BINDING FACTOR A, CHLOROPLASTIC-RELATED"/>
    <property type="match status" value="1"/>
</dbReference>
<dbReference type="Pfam" id="PF02033">
    <property type="entry name" value="RBFA"/>
    <property type="match status" value="1"/>
</dbReference>
<dbReference type="SUPFAM" id="SSF89919">
    <property type="entry name" value="Ribosome-binding factor A, RbfA"/>
    <property type="match status" value="1"/>
</dbReference>
<dbReference type="PROSITE" id="PS01319">
    <property type="entry name" value="RBFA"/>
    <property type="match status" value="1"/>
</dbReference>
<reference key="1">
    <citation type="journal article" date="2003" name="Appl. Microbiol. Biotechnol.">
        <title>The Corynebacterium glutamicum genome: features and impacts on biotechnological processes.</title>
        <authorList>
            <person name="Ikeda M."/>
            <person name="Nakagawa S."/>
        </authorList>
    </citation>
    <scope>NUCLEOTIDE SEQUENCE [LARGE SCALE GENOMIC DNA]</scope>
    <source>
        <strain>ATCC 13032 / DSM 20300 / JCM 1318 / BCRC 11384 / CCUG 27702 / LMG 3730 / NBRC 12168 / NCIMB 10025 / NRRL B-2784 / 534</strain>
    </source>
</reference>
<reference key="2">
    <citation type="journal article" date="2003" name="J. Biotechnol.">
        <title>The complete Corynebacterium glutamicum ATCC 13032 genome sequence and its impact on the production of L-aspartate-derived amino acids and vitamins.</title>
        <authorList>
            <person name="Kalinowski J."/>
            <person name="Bathe B."/>
            <person name="Bartels D."/>
            <person name="Bischoff N."/>
            <person name="Bott M."/>
            <person name="Burkovski A."/>
            <person name="Dusch N."/>
            <person name="Eggeling L."/>
            <person name="Eikmanns B.J."/>
            <person name="Gaigalat L."/>
            <person name="Goesmann A."/>
            <person name="Hartmann M."/>
            <person name="Huthmacher K."/>
            <person name="Kraemer R."/>
            <person name="Linke B."/>
            <person name="McHardy A.C."/>
            <person name="Meyer F."/>
            <person name="Moeckel B."/>
            <person name="Pfefferle W."/>
            <person name="Puehler A."/>
            <person name="Rey D.A."/>
            <person name="Rueckert C."/>
            <person name="Rupp O."/>
            <person name="Sahm H."/>
            <person name="Wendisch V.F."/>
            <person name="Wiegraebe I."/>
            <person name="Tauch A."/>
        </authorList>
    </citation>
    <scope>NUCLEOTIDE SEQUENCE [LARGE SCALE GENOMIC DNA]</scope>
    <source>
        <strain>ATCC 13032 / DSM 20300 / JCM 1318 / BCRC 11384 / CCUG 27702 / LMG 3730 / NBRC 12168 / NCIMB 10025 / NRRL B-2784 / 534</strain>
    </source>
</reference>
<feature type="chain" id="PRO_0000102654" description="Ribosome-binding factor A">
    <location>
        <begin position="1"/>
        <end position="149"/>
    </location>
</feature>
<feature type="region of interest" description="Disordered" evidence="2">
    <location>
        <begin position="123"/>
        <end position="149"/>
    </location>
</feature>
<gene>
    <name evidence="1" type="primary">rbfA</name>
    <name type="ordered locus">Cgl1984</name>
    <name type="ordered locus">cg2175</name>
</gene>